<gene>
    <name type="primary">panB</name>
    <name type="ordered locus">Rv2225</name>
    <name type="ORF">MTCY427.06</name>
</gene>
<protein>
    <recommendedName>
        <fullName>3-methyl-2-oxobutanoate hydroxymethyltransferase</fullName>
        <ecNumber>2.1.2.11</ecNumber>
    </recommendedName>
    <alternativeName>
        <fullName>Ketopantoate hydroxymethyltransferase</fullName>
        <shortName>KPHMT</shortName>
    </alternativeName>
</protein>
<name>PANB_MYCTU</name>
<sequence>MSEQTIYGANTPGGSGPRTKIRTHHLQRWKADGHKWAMLTAYDYSTARIFDEAGIPVLLVGDSAANVVYGYDTTVPISIDELIPLVRGVVRGAPHALVVADLPFGSYEAGPTAALAAATRFLKDGGAHAVKLEGGERVAEQIACLTAAGIPVMAHIGFTPQSVNTLGGFRVQGRGDAAEQTIADAIAVAEAGAFAVVMEMVPAELATQITGKLTIPTVGIGAGPNCDGQVLVWQDMAGFSGAKTARFVKRYADVGGELRRAAMQYAQEVAGGVFPADEHSF</sequence>
<proteinExistence type="evidence at protein level"/>
<keyword id="KW-0002">3D-structure</keyword>
<keyword id="KW-0007">Acetylation</keyword>
<keyword id="KW-0963">Cytoplasm</keyword>
<keyword id="KW-0903">Direct protein sequencing</keyword>
<keyword id="KW-0460">Magnesium</keyword>
<keyword id="KW-0479">Metal-binding</keyword>
<keyword id="KW-0566">Pantothenate biosynthesis</keyword>
<keyword id="KW-1185">Reference proteome</keyword>
<keyword id="KW-0808">Transferase</keyword>
<keyword id="KW-0832">Ubl conjugation</keyword>
<dbReference type="EC" id="2.1.2.11"/>
<dbReference type="EMBL" id="AL123456">
    <property type="protein sequence ID" value="CCP45003.1"/>
    <property type="molecule type" value="Genomic_DNA"/>
</dbReference>
<dbReference type="PIR" id="E70776">
    <property type="entry name" value="E70776"/>
</dbReference>
<dbReference type="RefSeq" id="NP_216741.1">
    <property type="nucleotide sequence ID" value="NC_000962.3"/>
</dbReference>
<dbReference type="RefSeq" id="WP_003411489.1">
    <property type="nucleotide sequence ID" value="NZ_NVQJ01000008.1"/>
</dbReference>
<dbReference type="PDB" id="1OY0">
    <property type="method" value="X-ray"/>
    <property type="resolution" value="2.80 A"/>
    <property type="chains" value="A/B/C/D/E=1-281"/>
</dbReference>
<dbReference type="PDBsum" id="1OY0"/>
<dbReference type="SMR" id="P9WIL7"/>
<dbReference type="FunCoup" id="P9WIL7">
    <property type="interactions" value="215"/>
</dbReference>
<dbReference type="STRING" id="83332.Rv2225"/>
<dbReference type="iPTMnet" id="P9WIL7"/>
<dbReference type="PaxDb" id="83332-Rv2225"/>
<dbReference type="DNASU" id="887440"/>
<dbReference type="GeneID" id="887440"/>
<dbReference type="KEGG" id="mtu:Rv2225"/>
<dbReference type="KEGG" id="mtv:RVBD_2225"/>
<dbReference type="TubercuList" id="Rv2225"/>
<dbReference type="eggNOG" id="COG0413">
    <property type="taxonomic scope" value="Bacteria"/>
</dbReference>
<dbReference type="InParanoid" id="P9WIL7"/>
<dbReference type="OrthoDB" id="9781789at2"/>
<dbReference type="PhylomeDB" id="P9WIL7"/>
<dbReference type="UniPathway" id="UPA00028">
    <property type="reaction ID" value="UER00003"/>
</dbReference>
<dbReference type="EvolutionaryTrace" id="P9WIL7"/>
<dbReference type="Proteomes" id="UP000001584">
    <property type="component" value="Chromosome"/>
</dbReference>
<dbReference type="GO" id="GO:0005737">
    <property type="term" value="C:cytoplasm"/>
    <property type="evidence" value="ECO:0000318"/>
    <property type="project" value="GO_Central"/>
</dbReference>
<dbReference type="GO" id="GO:0005886">
    <property type="term" value="C:plasma membrane"/>
    <property type="evidence" value="ECO:0007005"/>
    <property type="project" value="MTBBASE"/>
</dbReference>
<dbReference type="GO" id="GO:0003864">
    <property type="term" value="F:3-methyl-2-oxobutanoate hydroxymethyltransferase activity"/>
    <property type="evidence" value="ECO:0000314"/>
    <property type="project" value="MTBBASE"/>
</dbReference>
<dbReference type="GO" id="GO:0000287">
    <property type="term" value="F:magnesium ion binding"/>
    <property type="evidence" value="ECO:0000314"/>
    <property type="project" value="MTBBASE"/>
</dbReference>
<dbReference type="GO" id="GO:0015940">
    <property type="term" value="P:pantothenate biosynthetic process"/>
    <property type="evidence" value="ECO:0000314"/>
    <property type="project" value="MTBBASE"/>
</dbReference>
<dbReference type="CDD" id="cd06557">
    <property type="entry name" value="KPHMT-like"/>
    <property type="match status" value="1"/>
</dbReference>
<dbReference type="FunFam" id="3.20.20.60:FF:000003">
    <property type="entry name" value="3-methyl-2-oxobutanoate hydroxymethyltransferase"/>
    <property type="match status" value="1"/>
</dbReference>
<dbReference type="Gene3D" id="3.20.20.60">
    <property type="entry name" value="Phosphoenolpyruvate-binding domains"/>
    <property type="match status" value="1"/>
</dbReference>
<dbReference type="HAMAP" id="MF_00156">
    <property type="entry name" value="PanB"/>
    <property type="match status" value="1"/>
</dbReference>
<dbReference type="InterPro" id="IPR003700">
    <property type="entry name" value="Pantoate_hydroxy_MeTrfase"/>
</dbReference>
<dbReference type="InterPro" id="IPR015813">
    <property type="entry name" value="Pyrv/PenolPyrv_kinase-like_dom"/>
</dbReference>
<dbReference type="InterPro" id="IPR040442">
    <property type="entry name" value="Pyrv_kinase-like_dom_sf"/>
</dbReference>
<dbReference type="NCBIfam" id="TIGR00222">
    <property type="entry name" value="panB"/>
    <property type="match status" value="1"/>
</dbReference>
<dbReference type="NCBIfam" id="NF001452">
    <property type="entry name" value="PRK00311.1"/>
    <property type="match status" value="1"/>
</dbReference>
<dbReference type="PANTHER" id="PTHR20881">
    <property type="entry name" value="3-METHYL-2-OXOBUTANOATE HYDROXYMETHYLTRANSFERASE"/>
    <property type="match status" value="1"/>
</dbReference>
<dbReference type="PANTHER" id="PTHR20881:SF0">
    <property type="entry name" value="3-METHYL-2-OXOBUTANOATE HYDROXYMETHYLTRANSFERASE"/>
    <property type="match status" value="1"/>
</dbReference>
<dbReference type="Pfam" id="PF02548">
    <property type="entry name" value="Pantoate_transf"/>
    <property type="match status" value="1"/>
</dbReference>
<dbReference type="PIRSF" id="PIRSF000388">
    <property type="entry name" value="Pantoate_hydroxy_MeTrfase"/>
    <property type="match status" value="1"/>
</dbReference>
<dbReference type="SUPFAM" id="SSF51621">
    <property type="entry name" value="Phosphoenolpyruvate/pyruvate domain"/>
    <property type="match status" value="1"/>
</dbReference>
<comment type="function">
    <text evidence="3">Catalyzes the reversible reaction in which hydroxymethyl group from 5,10-methylenetetrahydrofolate is transferred onto alpha-ketoisovalerate to form ketopantoate.</text>
</comment>
<comment type="catalytic activity">
    <reaction evidence="3">
        <text>3-methyl-2-oxobutanoate + (6R)-5,10-methylene-5,6,7,8-tetrahydrofolate + H2O = 2-dehydropantoate + (6S)-5,6,7,8-tetrahydrofolate</text>
        <dbReference type="Rhea" id="RHEA:11824"/>
        <dbReference type="ChEBI" id="CHEBI:11561"/>
        <dbReference type="ChEBI" id="CHEBI:11851"/>
        <dbReference type="ChEBI" id="CHEBI:15377"/>
        <dbReference type="ChEBI" id="CHEBI:15636"/>
        <dbReference type="ChEBI" id="CHEBI:57453"/>
        <dbReference type="EC" id="2.1.2.11"/>
    </reaction>
</comment>
<comment type="cofactor">
    <cofactor evidence="3 4">
        <name>Mg(2+)</name>
        <dbReference type="ChEBI" id="CHEBI:18420"/>
    </cofactor>
    <cofactor evidence="3 4">
        <name>Co(2+)</name>
        <dbReference type="ChEBI" id="CHEBI:48828"/>
    </cofactor>
    <cofactor evidence="3 4">
        <name>Zn(2+)</name>
        <dbReference type="ChEBI" id="CHEBI:29105"/>
    </cofactor>
    <cofactor evidence="3 4">
        <name>Ni(2+)</name>
        <dbReference type="ChEBI" id="CHEBI:49786"/>
    </cofactor>
    <cofactor evidence="3 4">
        <name>Ca(2+)</name>
        <dbReference type="ChEBI" id="CHEBI:29108"/>
    </cofactor>
    <text evidence="3 4">Binds 1 Mg(2+) ion per subunit. Can also use Co(2+), Zn(2+), Ni(2+) and Ca(2+) to a lesser extent.</text>
</comment>
<comment type="biophysicochemical properties">
    <kinetics>
        <KM evidence="3">240 uM for alpha-ketoisovalerate (at 37 degrees Celsius and pH 7.5)</KM>
        <KM evidence="3">820 uM for 5,10-methylenetetrahydrofolate (at 37 degrees Celsius and pH 7.5)</KM>
        <Vmax evidence="3">1.6 umol/min/mg enzyme (at 37 degrees Celsius and pH 7.5)</Vmax>
    </kinetics>
    <phDependence>
        <text evidence="3">Optimum pH is 7.0-7.5.</text>
    </phDependence>
</comment>
<comment type="pathway">
    <text>Cofactor biosynthesis; (R)-pantothenate biosynthesis; (R)-pantoate from 3-methyl-2-oxobutanoate: step 1/2.</text>
</comment>
<comment type="subunit">
    <text evidence="4">Homodecamer; pentamer of dimers.</text>
</comment>
<comment type="subcellular location">
    <subcellularLocation>
        <location evidence="6">Cytoplasm</location>
    </subcellularLocation>
</comment>
<comment type="PTM">
    <text evidence="5">Pupylated at an undetermined lysine residue by the prokaryotic ubiquitin-like protein Pup with the help of the ligase PafA, which leads to its degradation by the proteasome. The cross-link involves the side-chain carboxylate of the C-terminal glutamate of Pup and the side-chain amino group of a lysine in PanB.</text>
</comment>
<comment type="mass spectrometry"/>
<comment type="miscellaneous">
    <text>Was identified as a natural substrate of the M.tuberculosis proteasome.</text>
</comment>
<comment type="miscellaneous">
    <text>Was identified as a high-confidence drug target.</text>
</comment>
<comment type="similarity">
    <text evidence="6">Belongs to the PanB family.</text>
</comment>
<reference key="1">
    <citation type="journal article" date="1998" name="Nature">
        <title>Deciphering the biology of Mycobacterium tuberculosis from the complete genome sequence.</title>
        <authorList>
            <person name="Cole S.T."/>
            <person name="Brosch R."/>
            <person name="Parkhill J."/>
            <person name="Garnier T."/>
            <person name="Churcher C.M."/>
            <person name="Harris D.E."/>
            <person name="Gordon S.V."/>
            <person name="Eiglmeier K."/>
            <person name="Gas S."/>
            <person name="Barry C.E. III"/>
            <person name="Tekaia F."/>
            <person name="Badcock K."/>
            <person name="Basham D."/>
            <person name="Brown D."/>
            <person name="Chillingworth T."/>
            <person name="Connor R."/>
            <person name="Davies R.M."/>
            <person name="Devlin K."/>
            <person name="Feltwell T."/>
            <person name="Gentles S."/>
            <person name="Hamlin N."/>
            <person name="Holroyd S."/>
            <person name="Hornsby T."/>
            <person name="Jagels K."/>
            <person name="Krogh A."/>
            <person name="McLean J."/>
            <person name="Moule S."/>
            <person name="Murphy L.D."/>
            <person name="Oliver S."/>
            <person name="Osborne J."/>
            <person name="Quail M.A."/>
            <person name="Rajandream M.A."/>
            <person name="Rogers J."/>
            <person name="Rutter S."/>
            <person name="Seeger K."/>
            <person name="Skelton S."/>
            <person name="Squares S."/>
            <person name="Squares R."/>
            <person name="Sulston J.E."/>
            <person name="Taylor K."/>
            <person name="Whitehead S."/>
            <person name="Barrell B.G."/>
        </authorList>
    </citation>
    <scope>NUCLEOTIDE SEQUENCE [LARGE SCALE GENOMIC DNA]</scope>
    <source>
        <strain>ATCC 25618 / H37Rv</strain>
    </source>
</reference>
<reference key="2">
    <citation type="journal article" date="2003" name="Biochemistry">
        <title>Mycobacterium tuberculosis ketopantoate hydroxymethyltransferase: tetrahydrofolate-independent hydroxymethyltransferase and enolization reactions with alpha-keto acids.</title>
        <authorList>
            <person name="Sugantino M."/>
            <person name="Zheng R."/>
            <person name="Yu M."/>
            <person name="Blanchard J.S."/>
        </authorList>
    </citation>
    <scope>PROTEIN SEQUENCE OF 2-11</scope>
    <scope>CATALYTIC ACTIVITY</scope>
    <scope>FUNCTION</scope>
    <scope>REACTION MECHANISM</scope>
    <scope>BIOPHYSICOCHEMICAL PROPERTIES</scope>
    <scope>MASS SPECTROMETRY</scope>
    <scope>COFACTOR</scope>
</reference>
<reference key="3">
    <citation type="journal article" date="2006" name="EMBO J.">
        <title>Identification of substrates of the Mycobacterium tuberculosis proteasome.</title>
        <authorList>
            <person name="Pearce M.J."/>
            <person name="Arora P."/>
            <person name="Festa R.A."/>
            <person name="Butler-Wu S.M."/>
            <person name="Gokhale R.S."/>
            <person name="Darwin K.H."/>
        </authorList>
    </citation>
    <scope>PROTEASOME SUBSTRATE</scope>
    <source>
        <strain>ATCC 25618 / H37Rv</strain>
    </source>
</reference>
<reference key="4">
    <citation type="journal article" date="2008" name="BMC Syst. Biol.">
        <title>targetTB: a target identification pipeline for Mycobacterium tuberculosis through an interactome, reactome and genome-scale structural analysis.</title>
        <authorList>
            <person name="Raman K."/>
            <person name="Yeturu K."/>
            <person name="Chandra N."/>
        </authorList>
    </citation>
    <scope>IDENTIFICATION AS A DRUG TARGET [LARGE SCALE ANALYSIS]</scope>
</reference>
<reference key="5">
    <citation type="journal article" date="2010" name="J. Am. Chem. Soc.">
        <title>Prokaryotic ubiquitin-like protein (Pup) is coupled to substrates via the side chain of its C-terminal glutamate.</title>
        <authorList>
            <person name="Sutter M."/>
            <person name="Damberger F.F."/>
            <person name="Imkamp F."/>
            <person name="Allain F.H."/>
            <person name="Weber-Ban E."/>
        </authorList>
    </citation>
    <scope>PUPYLATION</scope>
    <scope>NATURE OF THE CROSS-LINK</scope>
    <source>
        <strain>ATCC 25618 / H37Rv</strain>
    </source>
</reference>
<reference key="6">
    <citation type="journal article" date="2011" name="Mol. Cell. Proteomics">
        <title>Proteogenomic analysis of Mycobacterium tuberculosis by high resolution mass spectrometry.</title>
        <authorList>
            <person name="Kelkar D.S."/>
            <person name="Kumar D."/>
            <person name="Kumar P."/>
            <person name="Balakrishnan L."/>
            <person name="Muthusamy B."/>
            <person name="Yadav A.K."/>
            <person name="Shrivastava P."/>
            <person name="Marimuthu A."/>
            <person name="Anand S."/>
            <person name="Sundaram H."/>
            <person name="Kingsbury R."/>
            <person name="Harsha H.C."/>
            <person name="Nair B."/>
            <person name="Prasad T.S."/>
            <person name="Chauhan D.S."/>
            <person name="Katoch K."/>
            <person name="Katoch V.M."/>
            <person name="Kumar P."/>
            <person name="Chaerkady R."/>
            <person name="Ramachandran S."/>
            <person name="Dash D."/>
            <person name="Pandey A."/>
        </authorList>
    </citation>
    <scope>ACETYLATION [LARGE SCALE ANALYSIS] AT SER-2</scope>
    <scope>CLEAVAGE OF INITIATOR METHIONINE [LARGE SCALE ANALYSIS]</scope>
    <scope>IDENTIFICATION BY MASS SPECTROMETRY [LARGE SCALE ANALYSIS]</scope>
    <source>
        <strain>ATCC 25618 / H37Rv</strain>
    </source>
</reference>
<reference key="7">
    <citation type="journal article" date="2003" name="Structure">
        <title>The crystal structure of the first enzyme in the pantothenate biosynthetic pathway, ketopantoate hydroxymethyltransferase, from M. tuberculosis.</title>
        <authorList>
            <person name="Chaudhuri B.N."/>
            <person name="Sawaya M.R."/>
            <person name="Kim C.-Y."/>
            <person name="Waldo G.S."/>
            <person name="Park M.S."/>
            <person name="Terwilliger T.C."/>
            <person name="Yeates T.O."/>
        </authorList>
    </citation>
    <scope>X-RAY CRYSTALLOGRAPHY (2.8 ANGSTROMS) IN COMPLEX WITH MAGNESIUM IONS</scope>
    <scope>COFACTOR</scope>
    <scope>SUBUNIT</scope>
</reference>
<feature type="initiator methionine" description="Removed" evidence="3 7">
    <location>
        <position position="1"/>
    </location>
</feature>
<feature type="chain" id="PRO_0000184864" description="3-methyl-2-oxobutanoate hydroxymethyltransferase">
    <location>
        <begin position="2"/>
        <end position="281"/>
    </location>
</feature>
<feature type="region of interest" description="Disordered" evidence="2">
    <location>
        <begin position="1"/>
        <end position="20"/>
    </location>
</feature>
<feature type="active site" description="Proton acceptor" evidence="1">
    <location>
        <position position="199"/>
    </location>
</feature>
<feature type="binding site" evidence="1">
    <location>
        <begin position="62"/>
        <end position="63"/>
    </location>
    <ligand>
        <name>3-methyl-2-oxobutanoate</name>
        <dbReference type="ChEBI" id="CHEBI:11851"/>
    </ligand>
</feature>
<feature type="binding site">
    <location>
        <position position="62"/>
    </location>
    <ligand>
        <name>Mg(2+)</name>
        <dbReference type="ChEBI" id="CHEBI:18420"/>
    </ligand>
</feature>
<feature type="binding site" evidence="1">
    <location>
        <position position="101"/>
    </location>
    <ligand>
        <name>3-methyl-2-oxobutanoate</name>
        <dbReference type="ChEBI" id="CHEBI:11851"/>
    </ligand>
</feature>
<feature type="binding site" evidence="1">
    <location>
        <position position="101"/>
    </location>
    <ligand>
        <name>Mg(2+)</name>
        <dbReference type="ChEBI" id="CHEBI:18420"/>
    </ligand>
</feature>
<feature type="binding site" evidence="1">
    <location>
        <position position="131"/>
    </location>
    <ligand>
        <name>3-methyl-2-oxobutanoate</name>
        <dbReference type="ChEBI" id="CHEBI:11851"/>
    </ligand>
</feature>
<feature type="binding site">
    <location>
        <position position="133"/>
    </location>
    <ligand>
        <name>Mg(2+)</name>
        <dbReference type="ChEBI" id="CHEBI:18420"/>
    </ligand>
</feature>
<feature type="modified residue" description="N-acetylserine" evidence="7">
    <location>
        <position position="2"/>
    </location>
</feature>
<feature type="helix" evidence="8">
    <location>
        <begin position="23"/>
        <end position="32"/>
    </location>
</feature>
<feature type="strand" evidence="8">
    <location>
        <begin position="36"/>
        <end position="40"/>
    </location>
</feature>
<feature type="helix" evidence="8">
    <location>
        <begin position="44"/>
        <end position="51"/>
    </location>
</feature>
<feature type="turn" evidence="8">
    <location>
        <begin position="52"/>
        <end position="54"/>
    </location>
</feature>
<feature type="strand" evidence="8">
    <location>
        <begin position="57"/>
        <end position="60"/>
    </location>
</feature>
<feature type="helix" evidence="8">
    <location>
        <begin position="64"/>
        <end position="67"/>
    </location>
</feature>
<feature type="strand" evidence="8">
    <location>
        <begin position="72"/>
        <end position="76"/>
    </location>
</feature>
<feature type="helix" evidence="8">
    <location>
        <begin position="79"/>
        <end position="81"/>
    </location>
</feature>
<feature type="helix" evidence="8">
    <location>
        <begin position="83"/>
        <end position="92"/>
    </location>
</feature>
<feature type="strand" evidence="8">
    <location>
        <begin position="96"/>
        <end position="101"/>
    </location>
</feature>
<feature type="helix" evidence="8">
    <location>
        <begin position="111"/>
        <end position="123"/>
    </location>
</feature>
<feature type="strand" evidence="8">
    <location>
        <begin position="128"/>
        <end position="135"/>
    </location>
</feature>
<feature type="helix" evidence="8">
    <location>
        <begin position="136"/>
        <end position="138"/>
    </location>
</feature>
<feature type="helix" evidence="8">
    <location>
        <begin position="139"/>
        <end position="148"/>
    </location>
</feature>
<feature type="strand" evidence="8">
    <location>
        <begin position="152"/>
        <end position="157"/>
    </location>
</feature>
<feature type="helix" evidence="8">
    <location>
        <begin position="176"/>
        <end position="191"/>
    </location>
</feature>
<feature type="strand" evidence="8">
    <location>
        <begin position="194"/>
        <end position="200"/>
    </location>
</feature>
<feature type="helix" evidence="8">
    <location>
        <begin position="203"/>
        <end position="212"/>
    </location>
</feature>
<feature type="strand" evidence="8">
    <location>
        <begin position="217"/>
        <end position="222"/>
    </location>
</feature>
<feature type="strand" evidence="8">
    <location>
        <begin position="226"/>
        <end position="231"/>
    </location>
</feature>
<feature type="helix" evidence="8">
    <location>
        <begin position="233"/>
        <end position="236"/>
    </location>
</feature>
<feature type="helix" evidence="8">
    <location>
        <begin position="254"/>
        <end position="270"/>
    </location>
</feature>
<evidence type="ECO:0000250" key="1"/>
<evidence type="ECO:0000256" key="2">
    <source>
        <dbReference type="SAM" id="MobiDB-lite"/>
    </source>
</evidence>
<evidence type="ECO:0000269" key="3">
    <source>
    </source>
</evidence>
<evidence type="ECO:0000269" key="4">
    <source>
    </source>
</evidence>
<evidence type="ECO:0000269" key="5">
    <source>
    </source>
</evidence>
<evidence type="ECO:0000305" key="6"/>
<evidence type="ECO:0007744" key="7">
    <source>
    </source>
</evidence>
<evidence type="ECO:0007829" key="8">
    <source>
        <dbReference type="PDB" id="1OY0"/>
    </source>
</evidence>
<organism>
    <name type="scientific">Mycobacterium tuberculosis (strain ATCC 25618 / H37Rv)</name>
    <dbReference type="NCBI Taxonomy" id="83332"/>
    <lineage>
        <taxon>Bacteria</taxon>
        <taxon>Bacillati</taxon>
        <taxon>Actinomycetota</taxon>
        <taxon>Actinomycetes</taxon>
        <taxon>Mycobacteriales</taxon>
        <taxon>Mycobacteriaceae</taxon>
        <taxon>Mycobacterium</taxon>
        <taxon>Mycobacterium tuberculosis complex</taxon>
    </lineage>
</organism>
<accession>P9WIL7</accession>
<accession>L0TAJ8</accession>
<accession>P0A5Q8</accession>
<accession>Q10505</accession>